<gene>
    <name evidence="1" type="primary">pyrH</name>
    <name type="ordered locus">CPE1698</name>
</gene>
<sequence>MGTCKYKRVMLKLSGEALAGENGFGIDFNIAMNIAKAVKELVDMGIEVGAVVGGGNIWRGRSGEGMDRTTADYMGMLATSINALALQDSLESLGVDTRVQTAIEMKEIAEPYIRRRAMRHLEKGRVVIFGAGTGNPYFSTDTAAALRAAEIEADVILLAKKVDGVYDKDPHKYDDAKKYDELSYIEVLEQGLQVMDSTATSLCMDNNIPILVFALDNPENIKRVVLGENIGTIVSKK</sequence>
<feature type="chain" id="PRO_0000143838" description="Uridylate kinase">
    <location>
        <begin position="1"/>
        <end position="237"/>
    </location>
</feature>
<feature type="region of interest" description="Involved in allosteric activation by GTP" evidence="1">
    <location>
        <begin position="20"/>
        <end position="25"/>
    </location>
</feature>
<feature type="binding site" evidence="1">
    <location>
        <begin position="12"/>
        <end position="15"/>
    </location>
    <ligand>
        <name>ATP</name>
        <dbReference type="ChEBI" id="CHEBI:30616"/>
    </ligand>
</feature>
<feature type="binding site" evidence="1">
    <location>
        <position position="54"/>
    </location>
    <ligand>
        <name>UMP</name>
        <dbReference type="ChEBI" id="CHEBI:57865"/>
    </ligand>
</feature>
<feature type="binding site" evidence="1">
    <location>
        <position position="55"/>
    </location>
    <ligand>
        <name>ATP</name>
        <dbReference type="ChEBI" id="CHEBI:30616"/>
    </ligand>
</feature>
<feature type="binding site" evidence="1">
    <location>
        <position position="59"/>
    </location>
    <ligand>
        <name>ATP</name>
        <dbReference type="ChEBI" id="CHEBI:30616"/>
    </ligand>
</feature>
<feature type="binding site" evidence="1">
    <location>
        <position position="72"/>
    </location>
    <ligand>
        <name>UMP</name>
        <dbReference type="ChEBI" id="CHEBI:57865"/>
    </ligand>
</feature>
<feature type="binding site" evidence="1">
    <location>
        <begin position="133"/>
        <end position="140"/>
    </location>
    <ligand>
        <name>UMP</name>
        <dbReference type="ChEBI" id="CHEBI:57865"/>
    </ligand>
</feature>
<feature type="binding site" evidence="1">
    <location>
        <position position="166"/>
    </location>
    <ligand>
        <name>ATP</name>
        <dbReference type="ChEBI" id="CHEBI:30616"/>
    </ligand>
</feature>
<feature type="binding site" evidence="1">
    <location>
        <position position="169"/>
    </location>
    <ligand>
        <name>ATP</name>
        <dbReference type="ChEBI" id="CHEBI:30616"/>
    </ligand>
</feature>
<reference key="1">
    <citation type="journal article" date="2002" name="Proc. Natl. Acad. Sci. U.S.A.">
        <title>Complete genome sequence of Clostridium perfringens, an anaerobic flesh-eater.</title>
        <authorList>
            <person name="Shimizu T."/>
            <person name="Ohtani K."/>
            <person name="Hirakawa H."/>
            <person name="Ohshima K."/>
            <person name="Yamashita A."/>
            <person name="Shiba T."/>
            <person name="Ogasawara N."/>
            <person name="Hattori M."/>
            <person name="Kuhara S."/>
            <person name="Hayashi H."/>
        </authorList>
    </citation>
    <scope>NUCLEOTIDE SEQUENCE [LARGE SCALE GENOMIC DNA]</scope>
    <source>
        <strain>13 / Type A</strain>
    </source>
</reference>
<proteinExistence type="inferred from homology"/>
<protein>
    <recommendedName>
        <fullName evidence="1">Uridylate kinase</fullName>
        <shortName evidence="1">UK</shortName>
        <ecNumber evidence="1">2.7.4.22</ecNumber>
    </recommendedName>
    <alternativeName>
        <fullName evidence="1">Uridine monophosphate kinase</fullName>
        <shortName evidence="1">UMP kinase</shortName>
        <shortName evidence="1">UMPK</shortName>
    </alternativeName>
</protein>
<comment type="function">
    <text evidence="1">Catalyzes the reversible phosphorylation of UMP to UDP.</text>
</comment>
<comment type="catalytic activity">
    <reaction evidence="1">
        <text>UMP + ATP = UDP + ADP</text>
        <dbReference type="Rhea" id="RHEA:24400"/>
        <dbReference type="ChEBI" id="CHEBI:30616"/>
        <dbReference type="ChEBI" id="CHEBI:57865"/>
        <dbReference type="ChEBI" id="CHEBI:58223"/>
        <dbReference type="ChEBI" id="CHEBI:456216"/>
        <dbReference type="EC" id="2.7.4.22"/>
    </reaction>
</comment>
<comment type="activity regulation">
    <text evidence="1">Allosterically activated by GTP. Inhibited by UTP.</text>
</comment>
<comment type="pathway">
    <text evidence="1">Pyrimidine metabolism; CTP biosynthesis via de novo pathway; UDP from UMP (UMPK route): step 1/1.</text>
</comment>
<comment type="subunit">
    <text evidence="1">Homohexamer.</text>
</comment>
<comment type="subcellular location">
    <subcellularLocation>
        <location evidence="1">Cytoplasm</location>
    </subcellularLocation>
</comment>
<comment type="similarity">
    <text evidence="1">Belongs to the UMP kinase family.</text>
</comment>
<evidence type="ECO:0000255" key="1">
    <source>
        <dbReference type="HAMAP-Rule" id="MF_01220"/>
    </source>
</evidence>
<keyword id="KW-0021">Allosteric enzyme</keyword>
<keyword id="KW-0067">ATP-binding</keyword>
<keyword id="KW-0963">Cytoplasm</keyword>
<keyword id="KW-0418">Kinase</keyword>
<keyword id="KW-0547">Nucleotide-binding</keyword>
<keyword id="KW-0665">Pyrimidine biosynthesis</keyword>
<keyword id="KW-1185">Reference proteome</keyword>
<keyword id="KW-0808">Transferase</keyword>
<name>PYRH_CLOPE</name>
<dbReference type="EC" id="2.7.4.22" evidence="1"/>
<dbReference type="EMBL" id="BA000016">
    <property type="protein sequence ID" value="BAB81404.1"/>
    <property type="molecule type" value="Genomic_DNA"/>
</dbReference>
<dbReference type="RefSeq" id="WP_003459788.1">
    <property type="nucleotide sequence ID" value="NC_003366.1"/>
</dbReference>
<dbReference type="SMR" id="Q8XJQ8"/>
<dbReference type="STRING" id="195102.gene:10490962"/>
<dbReference type="GeneID" id="93001764"/>
<dbReference type="KEGG" id="cpe:CPE1698"/>
<dbReference type="HOGENOM" id="CLU_033861_0_0_9"/>
<dbReference type="UniPathway" id="UPA00159">
    <property type="reaction ID" value="UER00275"/>
</dbReference>
<dbReference type="Proteomes" id="UP000000818">
    <property type="component" value="Chromosome"/>
</dbReference>
<dbReference type="GO" id="GO:0005737">
    <property type="term" value="C:cytoplasm"/>
    <property type="evidence" value="ECO:0007669"/>
    <property type="project" value="UniProtKB-SubCell"/>
</dbReference>
<dbReference type="GO" id="GO:0005524">
    <property type="term" value="F:ATP binding"/>
    <property type="evidence" value="ECO:0007669"/>
    <property type="project" value="UniProtKB-KW"/>
</dbReference>
<dbReference type="GO" id="GO:0033862">
    <property type="term" value="F:UMP kinase activity"/>
    <property type="evidence" value="ECO:0007669"/>
    <property type="project" value="UniProtKB-EC"/>
</dbReference>
<dbReference type="GO" id="GO:0044210">
    <property type="term" value="P:'de novo' CTP biosynthetic process"/>
    <property type="evidence" value="ECO:0007669"/>
    <property type="project" value="UniProtKB-UniRule"/>
</dbReference>
<dbReference type="GO" id="GO:0006225">
    <property type="term" value="P:UDP biosynthetic process"/>
    <property type="evidence" value="ECO:0007669"/>
    <property type="project" value="TreeGrafter"/>
</dbReference>
<dbReference type="CDD" id="cd04254">
    <property type="entry name" value="AAK_UMPK-PyrH-Ec"/>
    <property type="match status" value="1"/>
</dbReference>
<dbReference type="FunFam" id="3.40.1160.10:FF:000001">
    <property type="entry name" value="Uridylate kinase"/>
    <property type="match status" value="1"/>
</dbReference>
<dbReference type="Gene3D" id="3.40.1160.10">
    <property type="entry name" value="Acetylglutamate kinase-like"/>
    <property type="match status" value="1"/>
</dbReference>
<dbReference type="HAMAP" id="MF_01220_B">
    <property type="entry name" value="PyrH_B"/>
    <property type="match status" value="1"/>
</dbReference>
<dbReference type="InterPro" id="IPR036393">
    <property type="entry name" value="AceGlu_kinase-like_sf"/>
</dbReference>
<dbReference type="InterPro" id="IPR001048">
    <property type="entry name" value="Asp/Glu/Uridylate_kinase"/>
</dbReference>
<dbReference type="InterPro" id="IPR001057">
    <property type="entry name" value="Glu/AcGlu_kinase"/>
</dbReference>
<dbReference type="InterPro" id="IPR011817">
    <property type="entry name" value="Uridylate_kinase"/>
</dbReference>
<dbReference type="InterPro" id="IPR015963">
    <property type="entry name" value="Uridylate_kinase_bac"/>
</dbReference>
<dbReference type="NCBIfam" id="TIGR02075">
    <property type="entry name" value="pyrH_bact"/>
    <property type="match status" value="1"/>
</dbReference>
<dbReference type="PANTHER" id="PTHR42833">
    <property type="entry name" value="URIDYLATE KINASE"/>
    <property type="match status" value="1"/>
</dbReference>
<dbReference type="PANTHER" id="PTHR42833:SF4">
    <property type="entry name" value="URIDYLATE KINASE PUMPKIN, CHLOROPLASTIC"/>
    <property type="match status" value="1"/>
</dbReference>
<dbReference type="Pfam" id="PF00696">
    <property type="entry name" value="AA_kinase"/>
    <property type="match status" value="1"/>
</dbReference>
<dbReference type="PIRSF" id="PIRSF005650">
    <property type="entry name" value="Uridylate_kin"/>
    <property type="match status" value="1"/>
</dbReference>
<dbReference type="PRINTS" id="PR00474">
    <property type="entry name" value="GLU5KINASE"/>
</dbReference>
<dbReference type="SUPFAM" id="SSF53633">
    <property type="entry name" value="Carbamate kinase-like"/>
    <property type="match status" value="1"/>
</dbReference>
<organism>
    <name type="scientific">Clostridium perfringens (strain 13 / Type A)</name>
    <dbReference type="NCBI Taxonomy" id="195102"/>
    <lineage>
        <taxon>Bacteria</taxon>
        <taxon>Bacillati</taxon>
        <taxon>Bacillota</taxon>
        <taxon>Clostridia</taxon>
        <taxon>Eubacteriales</taxon>
        <taxon>Clostridiaceae</taxon>
        <taxon>Clostridium</taxon>
    </lineage>
</organism>
<accession>Q8XJQ8</accession>